<reference key="1">
    <citation type="submission" date="1996-01" db="EMBL/GenBank/DDBJ databases">
        <authorList>
            <person name="O'Connell K.P."/>
            <person name="Raffel S.J."/>
            <person name="Saville B.J."/>
            <person name="Handelsman J."/>
        </authorList>
    </citation>
    <scope>NUCLEOTIDE SEQUENCE [GENOMIC DNA]</scope>
    <source>
        <strain>CIAT899</strain>
    </source>
</reference>
<accession>O05467</accession>
<gene>
    <name evidence="1" type="primary">murJ</name>
    <name type="synonym">mviN</name>
</gene>
<protein>
    <recommendedName>
        <fullName evidence="1">Probable lipid II flippase MurJ</fullName>
    </recommendedName>
</protein>
<name>MURJ_RHITR</name>
<sequence>MSLVKKFITVGGATLGSRIFGFARETLMAAALGTGPMADVFYAAFRFPNLFRRLFAEGAFNAAFVPLFAKEIEANGIDGAKRFSEEVFGVLFSVLLLITIVMELAMPLLVRWVIAPGFADDAEKFDLTVRLAAVMFPYLMSMSLTAMMSGMLNSLHHFFAAAVAPIFLNLVMISALFYAIYFGADPLTTAWYLSWSVLVAGVLQLAVVYIGVRHAGISIGLRFPRFTPNVKRLLLLAIPAAITGGVTQINLVIGQAIASGKEGAIAALQYADRIYQLPLGVVGVAVGIVLLPELARSLKSGHIKEAANIQNRSIEFVLFLTLPAAVALWLLSDDIIRVLYERGAFNANNTTLVGSILAIFGLGLPAFVLIKALQPGFYAREDTKSPMRYTAIAVAVNSALSILLFPVLAERGIALAEAVAGWLNAVQLFVTLYRRGHLVWEWSLARRTAMLLVSSAVMGGVIVYLSHRWEPLLGSGSTLLTKTGVLGLLILIAMAVYFIVAFLIGGVDVGMIRRNLKRKRPAPASDAKAVNGE</sequence>
<proteinExistence type="inferred from homology"/>
<dbReference type="EMBL" id="U47030">
    <property type="protein sequence ID" value="AAC32291.1"/>
    <property type="molecule type" value="Genomic_DNA"/>
</dbReference>
<dbReference type="RefSeq" id="WP_015338622.1">
    <property type="nucleotide sequence ID" value="NZ_JACIFW010000001.1"/>
</dbReference>
<dbReference type="SMR" id="O05467"/>
<dbReference type="UniPathway" id="UPA00219"/>
<dbReference type="GO" id="GO:0005886">
    <property type="term" value="C:plasma membrane"/>
    <property type="evidence" value="ECO:0007669"/>
    <property type="project" value="UniProtKB-SubCell"/>
</dbReference>
<dbReference type="GO" id="GO:0015648">
    <property type="term" value="F:lipid-linked peptidoglycan transporter activity"/>
    <property type="evidence" value="ECO:0007669"/>
    <property type="project" value="UniProtKB-UniRule"/>
</dbReference>
<dbReference type="GO" id="GO:0071555">
    <property type="term" value="P:cell wall organization"/>
    <property type="evidence" value="ECO:0007669"/>
    <property type="project" value="UniProtKB-KW"/>
</dbReference>
<dbReference type="GO" id="GO:0034204">
    <property type="term" value="P:lipid translocation"/>
    <property type="evidence" value="ECO:0007669"/>
    <property type="project" value="TreeGrafter"/>
</dbReference>
<dbReference type="GO" id="GO:0009252">
    <property type="term" value="P:peptidoglycan biosynthetic process"/>
    <property type="evidence" value="ECO:0007669"/>
    <property type="project" value="UniProtKB-UniRule"/>
</dbReference>
<dbReference type="GO" id="GO:0008360">
    <property type="term" value="P:regulation of cell shape"/>
    <property type="evidence" value="ECO:0007669"/>
    <property type="project" value="UniProtKB-KW"/>
</dbReference>
<dbReference type="CDD" id="cd13123">
    <property type="entry name" value="MATE_MurJ_like"/>
    <property type="match status" value="1"/>
</dbReference>
<dbReference type="HAMAP" id="MF_02078">
    <property type="entry name" value="MurJ_MviN"/>
    <property type="match status" value="1"/>
</dbReference>
<dbReference type="InterPro" id="IPR051050">
    <property type="entry name" value="Lipid_II_flippase_MurJ/MviN"/>
</dbReference>
<dbReference type="InterPro" id="IPR004268">
    <property type="entry name" value="MurJ"/>
</dbReference>
<dbReference type="NCBIfam" id="TIGR01695">
    <property type="entry name" value="murJ_mviN"/>
    <property type="match status" value="1"/>
</dbReference>
<dbReference type="PANTHER" id="PTHR47019">
    <property type="entry name" value="LIPID II FLIPPASE MURJ"/>
    <property type="match status" value="1"/>
</dbReference>
<dbReference type="PANTHER" id="PTHR47019:SF1">
    <property type="entry name" value="LIPID II FLIPPASE MURJ"/>
    <property type="match status" value="1"/>
</dbReference>
<dbReference type="Pfam" id="PF03023">
    <property type="entry name" value="MurJ"/>
    <property type="match status" value="1"/>
</dbReference>
<dbReference type="PIRSF" id="PIRSF002869">
    <property type="entry name" value="MviN"/>
    <property type="match status" value="1"/>
</dbReference>
<dbReference type="PRINTS" id="PR01806">
    <property type="entry name" value="VIRFACTRMVIN"/>
</dbReference>
<feature type="chain" id="PRO_0000182012" description="Probable lipid II flippase MurJ">
    <location>
        <begin position="1"/>
        <end position="533"/>
    </location>
</feature>
<feature type="transmembrane region" description="Helical" evidence="1">
    <location>
        <begin position="25"/>
        <end position="45"/>
    </location>
</feature>
<feature type="transmembrane region" description="Helical" evidence="1">
    <location>
        <begin position="90"/>
        <end position="110"/>
    </location>
</feature>
<feature type="transmembrane region" description="Helical" evidence="1">
    <location>
        <begin position="131"/>
        <end position="151"/>
    </location>
</feature>
<feature type="transmembrane region" description="Helical" evidence="1">
    <location>
        <begin position="158"/>
        <end position="178"/>
    </location>
</feature>
<feature type="transmembrane region" description="Helical" evidence="1">
    <location>
        <begin position="192"/>
        <end position="212"/>
    </location>
</feature>
<feature type="transmembrane region" description="Helical" evidence="1">
    <location>
        <begin position="233"/>
        <end position="253"/>
    </location>
</feature>
<feature type="transmembrane region" description="Helical" evidence="1">
    <location>
        <begin position="274"/>
        <end position="294"/>
    </location>
</feature>
<feature type="transmembrane region" description="Helical" evidence="1">
    <location>
        <begin position="316"/>
        <end position="336"/>
    </location>
</feature>
<feature type="transmembrane region" description="Helical" evidence="1">
    <location>
        <begin position="350"/>
        <end position="370"/>
    </location>
</feature>
<feature type="transmembrane region" description="Helical" evidence="1">
    <location>
        <begin position="389"/>
        <end position="409"/>
    </location>
</feature>
<feature type="transmembrane region" description="Helical" evidence="1">
    <location>
        <begin position="412"/>
        <end position="432"/>
    </location>
</feature>
<feature type="transmembrane region" description="Helical" evidence="1">
    <location>
        <begin position="449"/>
        <end position="469"/>
    </location>
</feature>
<feature type="transmembrane region" description="Helical" evidence="1">
    <location>
        <begin position="484"/>
        <end position="504"/>
    </location>
</feature>
<organism>
    <name type="scientific">Rhizobium tropici</name>
    <dbReference type="NCBI Taxonomy" id="398"/>
    <lineage>
        <taxon>Bacteria</taxon>
        <taxon>Pseudomonadati</taxon>
        <taxon>Pseudomonadota</taxon>
        <taxon>Alphaproteobacteria</taxon>
        <taxon>Hyphomicrobiales</taxon>
        <taxon>Rhizobiaceae</taxon>
        <taxon>Rhizobium/Agrobacterium group</taxon>
        <taxon>Rhizobium</taxon>
    </lineage>
</organism>
<comment type="function">
    <text evidence="1">Involved in peptidoglycan biosynthesis. Transports lipid-linked peptidoglycan precursors from the inner to the outer leaflet of the cytoplasmic membrane.</text>
</comment>
<comment type="pathway">
    <text evidence="1">Cell wall biogenesis; peptidoglycan biosynthesis.</text>
</comment>
<comment type="subcellular location">
    <subcellularLocation>
        <location evidence="1">Cell inner membrane</location>
        <topology evidence="1">Multi-pass membrane protein</topology>
    </subcellularLocation>
</comment>
<comment type="similarity">
    <text evidence="1">Belongs to the MurJ/MviN family.</text>
</comment>
<keyword id="KW-0997">Cell inner membrane</keyword>
<keyword id="KW-1003">Cell membrane</keyword>
<keyword id="KW-0133">Cell shape</keyword>
<keyword id="KW-0961">Cell wall biogenesis/degradation</keyword>
<keyword id="KW-0472">Membrane</keyword>
<keyword id="KW-0573">Peptidoglycan synthesis</keyword>
<keyword id="KW-0812">Transmembrane</keyword>
<keyword id="KW-1133">Transmembrane helix</keyword>
<keyword id="KW-0813">Transport</keyword>
<evidence type="ECO:0000255" key="1">
    <source>
        <dbReference type="HAMAP-Rule" id="MF_02078"/>
    </source>
</evidence>